<name>PROA_GEOUR</name>
<feature type="chain" id="PRO_1000080484" description="Gamma-glutamyl phosphate reductase">
    <location>
        <begin position="1"/>
        <end position="418"/>
    </location>
</feature>
<organism>
    <name type="scientific">Geotalea uraniireducens (strain Rf4)</name>
    <name type="common">Geobacter uraniireducens</name>
    <dbReference type="NCBI Taxonomy" id="351605"/>
    <lineage>
        <taxon>Bacteria</taxon>
        <taxon>Pseudomonadati</taxon>
        <taxon>Thermodesulfobacteriota</taxon>
        <taxon>Desulfuromonadia</taxon>
        <taxon>Geobacterales</taxon>
        <taxon>Geobacteraceae</taxon>
        <taxon>Geotalea</taxon>
    </lineage>
</organism>
<comment type="function">
    <text evidence="1">Catalyzes the NADPH-dependent reduction of L-glutamate 5-phosphate into L-glutamate 5-semialdehyde and phosphate. The product spontaneously undergoes cyclization to form 1-pyrroline-5-carboxylate.</text>
</comment>
<comment type="catalytic activity">
    <reaction evidence="1">
        <text>L-glutamate 5-semialdehyde + phosphate + NADP(+) = L-glutamyl 5-phosphate + NADPH + H(+)</text>
        <dbReference type="Rhea" id="RHEA:19541"/>
        <dbReference type="ChEBI" id="CHEBI:15378"/>
        <dbReference type="ChEBI" id="CHEBI:43474"/>
        <dbReference type="ChEBI" id="CHEBI:57783"/>
        <dbReference type="ChEBI" id="CHEBI:58066"/>
        <dbReference type="ChEBI" id="CHEBI:58274"/>
        <dbReference type="ChEBI" id="CHEBI:58349"/>
        <dbReference type="EC" id="1.2.1.41"/>
    </reaction>
</comment>
<comment type="pathway">
    <text evidence="1">Amino-acid biosynthesis; L-proline biosynthesis; L-glutamate 5-semialdehyde from L-glutamate: step 2/2.</text>
</comment>
<comment type="subcellular location">
    <subcellularLocation>
        <location evidence="1">Cytoplasm</location>
    </subcellularLocation>
</comment>
<comment type="similarity">
    <text evidence="1">Belongs to the gamma-glutamyl phosphate reductase family.</text>
</comment>
<reference key="1">
    <citation type="submission" date="2007-05" db="EMBL/GenBank/DDBJ databases">
        <title>Complete sequence of Geobacter uraniireducens Rf4.</title>
        <authorList>
            <consortium name="US DOE Joint Genome Institute"/>
            <person name="Copeland A."/>
            <person name="Lucas S."/>
            <person name="Lapidus A."/>
            <person name="Barry K."/>
            <person name="Detter J.C."/>
            <person name="Glavina del Rio T."/>
            <person name="Hammon N."/>
            <person name="Israni S."/>
            <person name="Dalin E."/>
            <person name="Tice H."/>
            <person name="Pitluck S."/>
            <person name="Chertkov O."/>
            <person name="Brettin T."/>
            <person name="Bruce D."/>
            <person name="Han C."/>
            <person name="Schmutz J."/>
            <person name="Larimer F."/>
            <person name="Land M."/>
            <person name="Hauser L."/>
            <person name="Kyrpides N."/>
            <person name="Mikhailova N."/>
            <person name="Shelobolina E."/>
            <person name="Aklujkar M."/>
            <person name="Lovley D."/>
            <person name="Richardson P."/>
        </authorList>
    </citation>
    <scope>NUCLEOTIDE SEQUENCE [LARGE SCALE GENOMIC DNA]</scope>
    <source>
        <strain>ATCC BAA-1134 / JCM 13001 / Rf4</strain>
    </source>
</reference>
<keyword id="KW-0028">Amino-acid biosynthesis</keyword>
<keyword id="KW-0963">Cytoplasm</keyword>
<keyword id="KW-0521">NADP</keyword>
<keyword id="KW-0560">Oxidoreductase</keyword>
<keyword id="KW-0641">Proline biosynthesis</keyword>
<keyword id="KW-1185">Reference proteome</keyword>
<accession>A5G906</accession>
<protein>
    <recommendedName>
        <fullName evidence="1">Gamma-glutamyl phosphate reductase</fullName>
        <shortName evidence="1">GPR</shortName>
        <ecNumber evidence="1">1.2.1.41</ecNumber>
    </recommendedName>
    <alternativeName>
        <fullName evidence="1">Glutamate-5-semialdehyde dehydrogenase</fullName>
    </alternativeName>
    <alternativeName>
        <fullName evidence="1">Glutamyl-gamma-semialdehyde dehydrogenase</fullName>
        <shortName evidence="1">GSA dehydrogenase</shortName>
    </alternativeName>
</protein>
<gene>
    <name evidence="1" type="primary">proA</name>
    <name type="ordered locus">Gura_4131</name>
</gene>
<proteinExistence type="inferred from homology"/>
<evidence type="ECO:0000255" key="1">
    <source>
        <dbReference type="HAMAP-Rule" id="MF_00412"/>
    </source>
</evidence>
<dbReference type="EC" id="1.2.1.41" evidence="1"/>
<dbReference type="EMBL" id="CP000698">
    <property type="protein sequence ID" value="ABQ28274.1"/>
    <property type="molecule type" value="Genomic_DNA"/>
</dbReference>
<dbReference type="SMR" id="A5G906"/>
<dbReference type="STRING" id="351605.Gura_4131"/>
<dbReference type="KEGG" id="gur:Gura_4131"/>
<dbReference type="HOGENOM" id="CLU_030231_0_0_7"/>
<dbReference type="OrthoDB" id="9809970at2"/>
<dbReference type="UniPathway" id="UPA00098">
    <property type="reaction ID" value="UER00360"/>
</dbReference>
<dbReference type="Proteomes" id="UP000006695">
    <property type="component" value="Chromosome"/>
</dbReference>
<dbReference type="GO" id="GO:0005737">
    <property type="term" value="C:cytoplasm"/>
    <property type="evidence" value="ECO:0007669"/>
    <property type="project" value="UniProtKB-SubCell"/>
</dbReference>
<dbReference type="GO" id="GO:0004350">
    <property type="term" value="F:glutamate-5-semialdehyde dehydrogenase activity"/>
    <property type="evidence" value="ECO:0007669"/>
    <property type="project" value="UniProtKB-UniRule"/>
</dbReference>
<dbReference type="GO" id="GO:0050661">
    <property type="term" value="F:NADP binding"/>
    <property type="evidence" value="ECO:0007669"/>
    <property type="project" value="InterPro"/>
</dbReference>
<dbReference type="GO" id="GO:0055129">
    <property type="term" value="P:L-proline biosynthetic process"/>
    <property type="evidence" value="ECO:0007669"/>
    <property type="project" value="UniProtKB-UniRule"/>
</dbReference>
<dbReference type="CDD" id="cd07079">
    <property type="entry name" value="ALDH_F18-19_ProA-GPR"/>
    <property type="match status" value="1"/>
</dbReference>
<dbReference type="FunFam" id="3.40.309.10:FF:000006">
    <property type="entry name" value="Gamma-glutamyl phosphate reductase"/>
    <property type="match status" value="1"/>
</dbReference>
<dbReference type="Gene3D" id="3.40.605.10">
    <property type="entry name" value="Aldehyde Dehydrogenase, Chain A, domain 1"/>
    <property type="match status" value="1"/>
</dbReference>
<dbReference type="Gene3D" id="3.40.309.10">
    <property type="entry name" value="Aldehyde Dehydrogenase, Chain A, domain 2"/>
    <property type="match status" value="1"/>
</dbReference>
<dbReference type="HAMAP" id="MF_00412">
    <property type="entry name" value="ProA"/>
    <property type="match status" value="1"/>
</dbReference>
<dbReference type="InterPro" id="IPR016161">
    <property type="entry name" value="Ald_DH/histidinol_DH"/>
</dbReference>
<dbReference type="InterPro" id="IPR016163">
    <property type="entry name" value="Ald_DH_C"/>
</dbReference>
<dbReference type="InterPro" id="IPR016162">
    <property type="entry name" value="Ald_DH_N"/>
</dbReference>
<dbReference type="InterPro" id="IPR015590">
    <property type="entry name" value="Aldehyde_DH_dom"/>
</dbReference>
<dbReference type="InterPro" id="IPR020593">
    <property type="entry name" value="G-glutamylP_reductase_CS"/>
</dbReference>
<dbReference type="InterPro" id="IPR012134">
    <property type="entry name" value="Glu-5-SA_DH"/>
</dbReference>
<dbReference type="InterPro" id="IPR000965">
    <property type="entry name" value="GPR_dom"/>
</dbReference>
<dbReference type="NCBIfam" id="NF001221">
    <property type="entry name" value="PRK00197.1"/>
    <property type="match status" value="1"/>
</dbReference>
<dbReference type="NCBIfam" id="TIGR00407">
    <property type="entry name" value="proA"/>
    <property type="match status" value="1"/>
</dbReference>
<dbReference type="PANTHER" id="PTHR11063:SF8">
    <property type="entry name" value="DELTA-1-PYRROLINE-5-CARBOXYLATE SYNTHASE"/>
    <property type="match status" value="1"/>
</dbReference>
<dbReference type="PANTHER" id="PTHR11063">
    <property type="entry name" value="GLUTAMATE SEMIALDEHYDE DEHYDROGENASE"/>
    <property type="match status" value="1"/>
</dbReference>
<dbReference type="Pfam" id="PF00171">
    <property type="entry name" value="Aldedh"/>
    <property type="match status" value="1"/>
</dbReference>
<dbReference type="PIRSF" id="PIRSF000151">
    <property type="entry name" value="GPR"/>
    <property type="match status" value="1"/>
</dbReference>
<dbReference type="SUPFAM" id="SSF53720">
    <property type="entry name" value="ALDH-like"/>
    <property type="match status" value="1"/>
</dbReference>
<dbReference type="PROSITE" id="PS01223">
    <property type="entry name" value="PROA"/>
    <property type="match status" value="1"/>
</dbReference>
<sequence>MTIAEKIRKIAADARQASLAMARLSSAAKNELLMNMAMALINNTPHLVEENAKDLSAGEKKGLSAAMLDRLMLDEARIKAMADGLREVVGLPDPVGEVTRMWKRPNELTVGKMRIPLGVIGIIYESRPNVTADAAALCLKAGNAVVLRGGSEAIYSNVAIARILQDEMRKDGIPVAALSVIPFVEREGVTEMLKQEEFIDVIIPRGGESLIRFVVEHSKIPVIKHYKGVCHVFVDASADFDMAERIIVNSKTQRPGVCNALETLLIHKDVAETFIPRIFETLAALKVEMRGDDCFRQFAPGATPATEEDWHAEYLDLILAARVVDDMDEAIAHINKYGSLHTEAIITSDYGNSQRFLREVNSSVVLVNASTRFSDGNQLGLGAEIGISTTKLHSFGPMGLEDLTTTKFIVYGEGQVRP</sequence>